<proteinExistence type="inferred from homology"/>
<gene>
    <name evidence="1" type="primary">katG</name>
    <name type="ordered locus">Ping_2142</name>
</gene>
<organism>
    <name type="scientific">Psychromonas ingrahamii (strain DSM 17664 / CCUG 51855 / 37)</name>
    <dbReference type="NCBI Taxonomy" id="357804"/>
    <lineage>
        <taxon>Bacteria</taxon>
        <taxon>Pseudomonadati</taxon>
        <taxon>Pseudomonadota</taxon>
        <taxon>Gammaproteobacteria</taxon>
        <taxon>Alteromonadales</taxon>
        <taxon>Psychromonadaceae</taxon>
        <taxon>Psychromonas</taxon>
    </lineage>
</organism>
<keyword id="KW-0349">Heme</keyword>
<keyword id="KW-0376">Hydrogen peroxide</keyword>
<keyword id="KW-0408">Iron</keyword>
<keyword id="KW-0479">Metal-binding</keyword>
<keyword id="KW-0560">Oxidoreductase</keyword>
<keyword id="KW-0575">Peroxidase</keyword>
<keyword id="KW-1185">Reference proteome</keyword>
<name>KATG_PSYIN</name>
<sequence>MSKNATNTGGKCPVMHGGATEVSISNMEWWPKALNLDILHQHDSKTNPMGPDFNYREMVKKLDVAALKKDMHALMTESQDWWLADWGHYGGLMIRLSWHAAGTYRIADGRGGAGTGNQRFAPINSWPDNVNLDKARRLLWPIKKKYGNKLSWADLIAYAGTIAYESMGLKTFGFAFGREDIWHPEKDTYWGSEKEWLAPSGSEGSRYSGERDLENPLAAVMMGLIYVNPEGVDGNPDPLKTAHDIRVTFERMAMNDEETVALTAGGHTVGKCHGNGDADQLGAEPEGAEIEDQGFGWLNKTKRGIGRDTVSSGIEGAWTTNPTQWDNGYFQLLLNYEWELKKSPAGAWQWEPINIKEEHRPVDVEDASIRLTPIMTDADMAMKMDPEYRKISDRFHQDQDYFSEVFARAWFKLTHRDMGPKVRYIGPDVPQEEQIWQDPVPAGSTDYDIQAVKDKIAASDLSVSEMVSTAWDSARTFRGSDKRGGANGARIRLAPQKDWKGNEPARLSKVLAVLEGIAAGSKASVADVIVLAGNVGIEQAAKAAGFDLTVPFSSGRGDATDEMTDLDSFDVLEPIHDGYRNWLKQDYAVSAEELMLDRTQLMGLTAHEMTVLIGGMRVIGTNQGGTKHGVLTEHEGTLSNDFFVNLTDMNYTWKPTGNNLYEIRDRKTDKVKWTATRVDLVFGSNSILRAYAEVYAQDDNKEKFVQDFVSAWTKVMNADRFDLI</sequence>
<accession>A1SWM1</accession>
<protein>
    <recommendedName>
        <fullName evidence="1">Catalase-peroxidase</fullName>
        <shortName evidence="1">CP</shortName>
        <ecNumber evidence="1">1.11.1.21</ecNumber>
    </recommendedName>
    <alternativeName>
        <fullName evidence="1">Peroxidase/catalase</fullName>
    </alternativeName>
</protein>
<reference key="1">
    <citation type="journal article" date="2008" name="BMC Genomics">
        <title>Genomics of an extreme psychrophile, Psychromonas ingrahamii.</title>
        <authorList>
            <person name="Riley M."/>
            <person name="Staley J.T."/>
            <person name="Danchin A."/>
            <person name="Wang T.Z."/>
            <person name="Brettin T.S."/>
            <person name="Hauser L.J."/>
            <person name="Land M.L."/>
            <person name="Thompson L.S."/>
        </authorList>
    </citation>
    <scope>NUCLEOTIDE SEQUENCE [LARGE SCALE GENOMIC DNA]</scope>
    <source>
        <strain>DSM 17664 / CCUG 51855 / 37</strain>
    </source>
</reference>
<evidence type="ECO:0000255" key="1">
    <source>
        <dbReference type="HAMAP-Rule" id="MF_01961"/>
    </source>
</evidence>
<feature type="chain" id="PRO_0000354874" description="Catalase-peroxidase">
    <location>
        <begin position="1"/>
        <end position="724"/>
    </location>
</feature>
<feature type="active site" description="Proton acceptor" evidence="1">
    <location>
        <position position="99"/>
    </location>
</feature>
<feature type="binding site" description="axial binding residue" evidence="1">
    <location>
        <position position="267"/>
    </location>
    <ligand>
        <name>heme b</name>
        <dbReference type="ChEBI" id="CHEBI:60344"/>
    </ligand>
    <ligandPart>
        <name>Fe</name>
        <dbReference type="ChEBI" id="CHEBI:18248"/>
    </ligandPart>
</feature>
<feature type="site" description="Transition state stabilizer" evidence="1">
    <location>
        <position position="95"/>
    </location>
</feature>
<feature type="cross-link" description="Tryptophyl-tyrosyl-methioninium (Trp-Tyr) (with M-252)" evidence="1">
    <location>
        <begin position="98"/>
        <end position="226"/>
    </location>
</feature>
<feature type="cross-link" description="Tryptophyl-tyrosyl-methioninium (Tyr-Met) (with W-98)" evidence="1">
    <location>
        <begin position="226"/>
        <end position="252"/>
    </location>
</feature>
<comment type="function">
    <text evidence="1">Bifunctional enzyme with both catalase and broad-spectrum peroxidase activity.</text>
</comment>
<comment type="catalytic activity">
    <reaction evidence="1">
        <text>H2O2 + AH2 = A + 2 H2O</text>
        <dbReference type="Rhea" id="RHEA:30275"/>
        <dbReference type="ChEBI" id="CHEBI:13193"/>
        <dbReference type="ChEBI" id="CHEBI:15377"/>
        <dbReference type="ChEBI" id="CHEBI:16240"/>
        <dbReference type="ChEBI" id="CHEBI:17499"/>
        <dbReference type="EC" id="1.11.1.21"/>
    </reaction>
</comment>
<comment type="catalytic activity">
    <reaction evidence="1">
        <text>2 H2O2 = O2 + 2 H2O</text>
        <dbReference type="Rhea" id="RHEA:20309"/>
        <dbReference type="ChEBI" id="CHEBI:15377"/>
        <dbReference type="ChEBI" id="CHEBI:15379"/>
        <dbReference type="ChEBI" id="CHEBI:16240"/>
        <dbReference type="EC" id="1.11.1.21"/>
    </reaction>
</comment>
<comment type="cofactor">
    <cofactor evidence="1">
        <name>heme b</name>
        <dbReference type="ChEBI" id="CHEBI:60344"/>
    </cofactor>
    <text evidence="1">Binds 1 heme b (iron(II)-protoporphyrin IX) group per dimer.</text>
</comment>
<comment type="subunit">
    <text evidence="1">Homodimer or homotetramer.</text>
</comment>
<comment type="PTM">
    <text evidence="1">Formation of the three residue Trp-Tyr-Met cross-link is important for the catalase, but not the peroxidase activity of the enzyme.</text>
</comment>
<comment type="similarity">
    <text evidence="1">Belongs to the peroxidase family. Peroxidase/catalase subfamily.</text>
</comment>
<dbReference type="EC" id="1.11.1.21" evidence="1"/>
<dbReference type="EMBL" id="CP000510">
    <property type="protein sequence ID" value="ABM03886.1"/>
    <property type="molecule type" value="Genomic_DNA"/>
</dbReference>
<dbReference type="RefSeq" id="WP_011770446.1">
    <property type="nucleotide sequence ID" value="NC_008709.1"/>
</dbReference>
<dbReference type="SMR" id="A1SWM1"/>
<dbReference type="STRING" id="357804.Ping_2142"/>
<dbReference type="KEGG" id="pin:Ping_2142"/>
<dbReference type="eggNOG" id="COG0376">
    <property type="taxonomic scope" value="Bacteria"/>
</dbReference>
<dbReference type="HOGENOM" id="CLU_025424_2_0_6"/>
<dbReference type="OrthoDB" id="9759743at2"/>
<dbReference type="Proteomes" id="UP000000639">
    <property type="component" value="Chromosome"/>
</dbReference>
<dbReference type="GO" id="GO:0005829">
    <property type="term" value="C:cytosol"/>
    <property type="evidence" value="ECO:0007669"/>
    <property type="project" value="TreeGrafter"/>
</dbReference>
<dbReference type="GO" id="GO:0004096">
    <property type="term" value="F:catalase activity"/>
    <property type="evidence" value="ECO:0007669"/>
    <property type="project" value="UniProtKB-UniRule"/>
</dbReference>
<dbReference type="GO" id="GO:0020037">
    <property type="term" value="F:heme binding"/>
    <property type="evidence" value="ECO:0007669"/>
    <property type="project" value="InterPro"/>
</dbReference>
<dbReference type="GO" id="GO:0046872">
    <property type="term" value="F:metal ion binding"/>
    <property type="evidence" value="ECO:0007669"/>
    <property type="project" value="UniProtKB-KW"/>
</dbReference>
<dbReference type="GO" id="GO:0070301">
    <property type="term" value="P:cellular response to hydrogen peroxide"/>
    <property type="evidence" value="ECO:0007669"/>
    <property type="project" value="TreeGrafter"/>
</dbReference>
<dbReference type="GO" id="GO:0042744">
    <property type="term" value="P:hydrogen peroxide catabolic process"/>
    <property type="evidence" value="ECO:0007669"/>
    <property type="project" value="UniProtKB-KW"/>
</dbReference>
<dbReference type="CDD" id="cd00649">
    <property type="entry name" value="catalase_peroxidase_1"/>
    <property type="match status" value="1"/>
</dbReference>
<dbReference type="CDD" id="cd08200">
    <property type="entry name" value="catalase_peroxidase_2"/>
    <property type="match status" value="1"/>
</dbReference>
<dbReference type="FunFam" id="1.10.420.10:FF:000002">
    <property type="entry name" value="Catalase-peroxidase"/>
    <property type="match status" value="1"/>
</dbReference>
<dbReference type="FunFam" id="1.10.420.10:FF:000004">
    <property type="entry name" value="Catalase-peroxidase"/>
    <property type="match status" value="1"/>
</dbReference>
<dbReference type="FunFam" id="1.10.520.10:FF:000002">
    <property type="entry name" value="Catalase-peroxidase"/>
    <property type="match status" value="1"/>
</dbReference>
<dbReference type="Gene3D" id="1.10.520.10">
    <property type="match status" value="2"/>
</dbReference>
<dbReference type="Gene3D" id="1.10.420.10">
    <property type="entry name" value="Peroxidase, domain 2"/>
    <property type="match status" value="2"/>
</dbReference>
<dbReference type="HAMAP" id="MF_01961">
    <property type="entry name" value="Catal_peroxid"/>
    <property type="match status" value="1"/>
</dbReference>
<dbReference type="InterPro" id="IPR000763">
    <property type="entry name" value="Catalase_peroxidase"/>
</dbReference>
<dbReference type="InterPro" id="IPR002016">
    <property type="entry name" value="Haem_peroxidase"/>
</dbReference>
<dbReference type="InterPro" id="IPR010255">
    <property type="entry name" value="Haem_peroxidase_sf"/>
</dbReference>
<dbReference type="InterPro" id="IPR019794">
    <property type="entry name" value="Peroxidases_AS"/>
</dbReference>
<dbReference type="NCBIfam" id="TIGR00198">
    <property type="entry name" value="cat_per_HPI"/>
    <property type="match status" value="1"/>
</dbReference>
<dbReference type="NCBIfam" id="NF011635">
    <property type="entry name" value="PRK15061.1"/>
    <property type="match status" value="1"/>
</dbReference>
<dbReference type="PANTHER" id="PTHR30555:SF6">
    <property type="entry name" value="CATALASE-PEROXIDASE"/>
    <property type="match status" value="1"/>
</dbReference>
<dbReference type="PANTHER" id="PTHR30555">
    <property type="entry name" value="HYDROPEROXIDASE I, BIFUNCTIONAL CATALASE-PEROXIDASE"/>
    <property type="match status" value="1"/>
</dbReference>
<dbReference type="Pfam" id="PF00141">
    <property type="entry name" value="peroxidase"/>
    <property type="match status" value="2"/>
</dbReference>
<dbReference type="PRINTS" id="PR00460">
    <property type="entry name" value="BPEROXIDASE"/>
</dbReference>
<dbReference type="PRINTS" id="PR00458">
    <property type="entry name" value="PEROXIDASE"/>
</dbReference>
<dbReference type="SUPFAM" id="SSF48113">
    <property type="entry name" value="Heme-dependent peroxidases"/>
    <property type="match status" value="2"/>
</dbReference>
<dbReference type="PROSITE" id="PS00436">
    <property type="entry name" value="PEROXIDASE_2"/>
    <property type="match status" value="1"/>
</dbReference>
<dbReference type="PROSITE" id="PS50873">
    <property type="entry name" value="PEROXIDASE_4"/>
    <property type="match status" value="1"/>
</dbReference>